<organism>
    <name type="scientific">Prochlorococcus marinus (strain MIT 9313)</name>
    <dbReference type="NCBI Taxonomy" id="74547"/>
    <lineage>
        <taxon>Bacteria</taxon>
        <taxon>Bacillati</taxon>
        <taxon>Cyanobacteriota</taxon>
        <taxon>Cyanophyceae</taxon>
        <taxon>Synechococcales</taxon>
        <taxon>Prochlorococcaceae</taxon>
        <taxon>Prochlorococcus</taxon>
    </lineage>
</organism>
<sequence>MSLDTTEKQQLINANQTHGTDTGSVEVQVAMLSERITKLSSHLQENKHDFSSRQGLLKMIGRRKRLLSYVRGKSEQRYNGLITKLGIRG</sequence>
<keyword id="KW-1185">Reference proteome</keyword>
<keyword id="KW-0687">Ribonucleoprotein</keyword>
<keyword id="KW-0689">Ribosomal protein</keyword>
<keyword id="KW-0694">RNA-binding</keyword>
<keyword id="KW-0699">rRNA-binding</keyword>
<reference key="1">
    <citation type="journal article" date="2003" name="Nature">
        <title>Genome divergence in two Prochlorococcus ecotypes reflects oceanic niche differentiation.</title>
        <authorList>
            <person name="Rocap G."/>
            <person name="Larimer F.W."/>
            <person name="Lamerdin J.E."/>
            <person name="Malfatti S."/>
            <person name="Chain P."/>
            <person name="Ahlgren N.A."/>
            <person name="Arellano A."/>
            <person name="Coleman M."/>
            <person name="Hauser L."/>
            <person name="Hess W.R."/>
            <person name="Johnson Z.I."/>
            <person name="Land M.L."/>
            <person name="Lindell D."/>
            <person name="Post A.F."/>
            <person name="Regala W."/>
            <person name="Shah M."/>
            <person name="Shaw S.L."/>
            <person name="Steglich C."/>
            <person name="Sullivan M.B."/>
            <person name="Ting C.S."/>
            <person name="Tolonen A."/>
            <person name="Webb E.A."/>
            <person name="Zinser E.R."/>
            <person name="Chisholm S.W."/>
        </authorList>
    </citation>
    <scope>NUCLEOTIDE SEQUENCE [LARGE SCALE GENOMIC DNA]</scope>
    <source>
        <strain>MIT 9313</strain>
    </source>
</reference>
<protein>
    <recommendedName>
        <fullName evidence="1">Small ribosomal subunit protein uS15</fullName>
    </recommendedName>
    <alternativeName>
        <fullName evidence="3">30S ribosomal protein S15</fullName>
    </alternativeName>
</protein>
<feature type="chain" id="PRO_0000115505" description="Small ribosomal subunit protein uS15">
    <location>
        <begin position="1"/>
        <end position="89"/>
    </location>
</feature>
<feature type="region of interest" description="Disordered" evidence="2">
    <location>
        <begin position="1"/>
        <end position="23"/>
    </location>
</feature>
<feature type="compositionally biased region" description="Polar residues" evidence="2">
    <location>
        <begin position="8"/>
        <end position="23"/>
    </location>
</feature>
<proteinExistence type="inferred from homology"/>
<accession>Q7TV07</accession>
<gene>
    <name evidence="1" type="primary">rpsO</name>
    <name evidence="1" type="synonym">rps15</name>
    <name type="ordered locus">PMT_0645</name>
</gene>
<comment type="function">
    <text evidence="1">One of the primary rRNA binding proteins, it binds directly to 16S rRNA where it helps nucleate assembly of the platform of the 30S subunit by binding and bridging several RNA helices of the 16S rRNA.</text>
</comment>
<comment type="function">
    <text evidence="1">Forms an intersubunit bridge (bridge B4) with the 23S rRNA of the 50S subunit in the ribosome.</text>
</comment>
<comment type="subunit">
    <text evidence="1">Part of the 30S ribosomal subunit. Forms a bridge to the 50S subunit in the 70S ribosome, contacting the 23S rRNA.</text>
</comment>
<comment type="similarity">
    <text evidence="1">Belongs to the universal ribosomal protein uS15 family.</text>
</comment>
<evidence type="ECO:0000255" key="1">
    <source>
        <dbReference type="HAMAP-Rule" id="MF_01343"/>
    </source>
</evidence>
<evidence type="ECO:0000256" key="2">
    <source>
        <dbReference type="SAM" id="MobiDB-lite"/>
    </source>
</evidence>
<evidence type="ECO:0000305" key="3"/>
<dbReference type="EMBL" id="BX548175">
    <property type="protein sequence ID" value="CAE20820.1"/>
    <property type="molecule type" value="Genomic_DNA"/>
</dbReference>
<dbReference type="RefSeq" id="WP_011130024.1">
    <property type="nucleotide sequence ID" value="NC_005071.1"/>
</dbReference>
<dbReference type="SMR" id="Q7TV07"/>
<dbReference type="KEGG" id="pmt:PMT_0645"/>
<dbReference type="eggNOG" id="COG0184">
    <property type="taxonomic scope" value="Bacteria"/>
</dbReference>
<dbReference type="HOGENOM" id="CLU_148518_0_1_3"/>
<dbReference type="OrthoDB" id="9799262at2"/>
<dbReference type="Proteomes" id="UP000001423">
    <property type="component" value="Chromosome"/>
</dbReference>
<dbReference type="GO" id="GO:0022627">
    <property type="term" value="C:cytosolic small ribosomal subunit"/>
    <property type="evidence" value="ECO:0007669"/>
    <property type="project" value="TreeGrafter"/>
</dbReference>
<dbReference type="GO" id="GO:0019843">
    <property type="term" value="F:rRNA binding"/>
    <property type="evidence" value="ECO:0007669"/>
    <property type="project" value="UniProtKB-UniRule"/>
</dbReference>
<dbReference type="GO" id="GO:0003735">
    <property type="term" value="F:structural constituent of ribosome"/>
    <property type="evidence" value="ECO:0007669"/>
    <property type="project" value="InterPro"/>
</dbReference>
<dbReference type="GO" id="GO:0006412">
    <property type="term" value="P:translation"/>
    <property type="evidence" value="ECO:0007669"/>
    <property type="project" value="UniProtKB-UniRule"/>
</dbReference>
<dbReference type="CDD" id="cd00353">
    <property type="entry name" value="Ribosomal_S15p_S13e"/>
    <property type="match status" value="1"/>
</dbReference>
<dbReference type="FunFam" id="1.10.287.10:FF:000002">
    <property type="entry name" value="30S ribosomal protein S15"/>
    <property type="match status" value="1"/>
</dbReference>
<dbReference type="Gene3D" id="6.10.250.3130">
    <property type="match status" value="1"/>
</dbReference>
<dbReference type="Gene3D" id="1.10.287.10">
    <property type="entry name" value="S15/NS1, RNA-binding"/>
    <property type="match status" value="1"/>
</dbReference>
<dbReference type="HAMAP" id="MF_01343_B">
    <property type="entry name" value="Ribosomal_uS15_B"/>
    <property type="match status" value="1"/>
</dbReference>
<dbReference type="InterPro" id="IPR000589">
    <property type="entry name" value="Ribosomal_uS15"/>
</dbReference>
<dbReference type="InterPro" id="IPR005290">
    <property type="entry name" value="Ribosomal_uS15_bac-type"/>
</dbReference>
<dbReference type="InterPro" id="IPR009068">
    <property type="entry name" value="uS15_NS1_RNA-bd_sf"/>
</dbReference>
<dbReference type="NCBIfam" id="TIGR00952">
    <property type="entry name" value="S15_bact"/>
    <property type="match status" value="1"/>
</dbReference>
<dbReference type="PANTHER" id="PTHR23321">
    <property type="entry name" value="RIBOSOMAL PROTEIN S15, BACTERIAL AND ORGANELLAR"/>
    <property type="match status" value="1"/>
</dbReference>
<dbReference type="PANTHER" id="PTHR23321:SF26">
    <property type="entry name" value="SMALL RIBOSOMAL SUBUNIT PROTEIN US15M"/>
    <property type="match status" value="1"/>
</dbReference>
<dbReference type="Pfam" id="PF00312">
    <property type="entry name" value="Ribosomal_S15"/>
    <property type="match status" value="1"/>
</dbReference>
<dbReference type="SMART" id="SM01387">
    <property type="entry name" value="Ribosomal_S15"/>
    <property type="match status" value="1"/>
</dbReference>
<dbReference type="SUPFAM" id="SSF47060">
    <property type="entry name" value="S15/NS1 RNA-binding domain"/>
    <property type="match status" value="1"/>
</dbReference>
<dbReference type="PROSITE" id="PS00362">
    <property type="entry name" value="RIBOSOMAL_S15"/>
    <property type="match status" value="1"/>
</dbReference>
<name>RS15_PROMM</name>